<name>CNTI_PSEAE</name>
<proteinExistence type="evidence at transcript level"/>
<protein>
    <recommendedName>
        <fullName evidence="6">Pseudopaline exporter CntI</fullName>
    </recommendedName>
</protein>
<keyword id="KW-0997">Cell inner membrane</keyword>
<keyword id="KW-1003">Cell membrane</keyword>
<keyword id="KW-0472">Membrane</keyword>
<keyword id="KW-1185">Reference proteome</keyword>
<keyword id="KW-0677">Repeat</keyword>
<keyword id="KW-0812">Transmembrane</keyword>
<keyword id="KW-1133">Transmembrane helix</keyword>
<keyword id="KW-0813">Transport</keyword>
<sequence length="284" mass="30723">MVLDLLKSGVLLAVLASFTFSVMNALVKEASATLPAAEIVFFRSAIGTLLIYLLMRQAGVALSRQGVPMLLVRGVMGALYLVCYFYAIAHIPLADASILAHMSPFFVILFSALFLGERIPRAVYWLLLVVVLGALMIVKPFSYSSYSVYAVVGLLSAVFAAGASVAIRQLSARHHTYEIVFYFLAVATLVAIPLMWNDFVVPATLREWGLLLAIGVVSLLGQVFLTRAFSHESATIVAVTRYIGIVFNAGWGWLFWSEVPDALTIAGGVLIVVACIALSRTKKG</sequence>
<dbReference type="EMBL" id="AE004091">
    <property type="protein sequence ID" value="AAG08219.1"/>
    <property type="molecule type" value="Genomic_DNA"/>
</dbReference>
<dbReference type="PIR" id="F83042">
    <property type="entry name" value="F83042"/>
</dbReference>
<dbReference type="RefSeq" id="NP_253521.1">
    <property type="nucleotide sequence ID" value="NC_002516.2"/>
</dbReference>
<dbReference type="RefSeq" id="WP_003104336.1">
    <property type="nucleotide sequence ID" value="NZ_QZGE01000002.1"/>
</dbReference>
<dbReference type="SMR" id="Q9HUX6"/>
<dbReference type="STRING" id="208964.PA4834"/>
<dbReference type="TCDB" id="2.A.7.28.13">
    <property type="family name" value="the drug/metabolite transporter (dmt) superfamily"/>
</dbReference>
<dbReference type="PaxDb" id="208964-PA4834"/>
<dbReference type="DNASU" id="882351"/>
<dbReference type="GeneID" id="882351"/>
<dbReference type="KEGG" id="pae:PA4834"/>
<dbReference type="PATRIC" id="fig|208964.12.peg.5065"/>
<dbReference type="PseudoCAP" id="PA4834"/>
<dbReference type="HOGENOM" id="CLU_032828_0_1_6"/>
<dbReference type="InParanoid" id="Q9HUX6"/>
<dbReference type="OrthoDB" id="5565182at2"/>
<dbReference type="PhylomeDB" id="Q9HUX6"/>
<dbReference type="BioCyc" id="PAER208964:G1FZ6-4948-MONOMER"/>
<dbReference type="Proteomes" id="UP000002438">
    <property type="component" value="Chromosome"/>
</dbReference>
<dbReference type="GO" id="GO:0016020">
    <property type="term" value="C:membrane"/>
    <property type="evidence" value="ECO:0000318"/>
    <property type="project" value="GO_Central"/>
</dbReference>
<dbReference type="GO" id="GO:0005886">
    <property type="term" value="C:plasma membrane"/>
    <property type="evidence" value="ECO:0007669"/>
    <property type="project" value="UniProtKB-SubCell"/>
</dbReference>
<dbReference type="InterPro" id="IPR000620">
    <property type="entry name" value="EamA_dom"/>
</dbReference>
<dbReference type="PANTHER" id="PTHR22911">
    <property type="entry name" value="ACYL-MALONYL CONDENSING ENZYME-RELATED"/>
    <property type="match status" value="1"/>
</dbReference>
<dbReference type="PANTHER" id="PTHR22911:SF6">
    <property type="entry name" value="SOLUTE CARRIER FAMILY 35 MEMBER G1"/>
    <property type="match status" value="1"/>
</dbReference>
<dbReference type="Pfam" id="PF00892">
    <property type="entry name" value="EamA"/>
    <property type="match status" value="2"/>
</dbReference>
<dbReference type="SUPFAM" id="SSF103481">
    <property type="entry name" value="Multidrug resistance efflux transporter EmrE"/>
    <property type="match status" value="2"/>
</dbReference>
<evidence type="ECO:0000250" key="1">
    <source>
        <dbReference type="UniProtKB" id="A0A0H2ZHZ4"/>
    </source>
</evidence>
<evidence type="ECO:0000255" key="2"/>
<evidence type="ECO:0000269" key="3">
    <source>
    </source>
</evidence>
<evidence type="ECO:0000269" key="4">
    <source>
    </source>
</evidence>
<evidence type="ECO:0000303" key="5">
    <source>
    </source>
</evidence>
<evidence type="ECO:0000305" key="6"/>
<evidence type="ECO:0000312" key="7">
    <source>
        <dbReference type="EMBL" id="AAG08219.1"/>
    </source>
</evidence>
<reference key="1">
    <citation type="journal article" date="2000" name="Nature">
        <title>Complete genome sequence of Pseudomonas aeruginosa PAO1, an opportunistic pathogen.</title>
        <authorList>
            <person name="Stover C.K."/>
            <person name="Pham X.-Q.T."/>
            <person name="Erwin A.L."/>
            <person name="Mizoguchi S.D."/>
            <person name="Warrener P."/>
            <person name="Hickey M.J."/>
            <person name="Brinkman F.S.L."/>
            <person name="Hufnagle W.O."/>
            <person name="Kowalik D.J."/>
            <person name="Lagrou M."/>
            <person name="Garber R.L."/>
            <person name="Goltry L."/>
            <person name="Tolentino E."/>
            <person name="Westbrock-Wadman S."/>
            <person name="Yuan Y."/>
            <person name="Brody L.L."/>
            <person name="Coulter S.N."/>
            <person name="Folger K.R."/>
            <person name="Kas A."/>
            <person name="Larbig K."/>
            <person name="Lim R.M."/>
            <person name="Smith K.A."/>
            <person name="Spencer D.H."/>
            <person name="Wong G.K.-S."/>
            <person name="Wu Z."/>
            <person name="Paulsen I.T."/>
            <person name="Reizer J."/>
            <person name="Saier M.H. Jr."/>
            <person name="Hancock R.E.W."/>
            <person name="Lory S."/>
            <person name="Olson M.V."/>
        </authorList>
    </citation>
    <scope>NUCLEOTIDE SEQUENCE [LARGE SCALE GENOMIC DNA]</scope>
    <source>
        <strain>ATCC 15692 / DSM 22644 / CIP 104116 / JCM 14847 / LMG 12228 / 1C / PRS 101 / PAO1</strain>
    </source>
</reference>
<reference key="2">
    <citation type="journal article" date="2015" name="Sci. Rep.">
        <title>A novel siderophore system is essential for the growth of Pseudomonas aeruginosa in airway mucus.</title>
        <authorList>
            <person name="Gi M."/>
            <person name="Lee K.M."/>
            <person name="Kim S.C."/>
            <person name="Yoon J.H."/>
            <person name="Yoon S.S."/>
            <person name="Choi J.Y."/>
        </authorList>
    </citation>
    <scope>FUNCTION</scope>
    <scope>INDUCTION</scope>
    <scope>DISRUPTION PHENOTYPE</scope>
    <source>
        <strain>ATCC 15692 / DSM 22644 / CIP 104116 / JCM 14847 / LMG 12228 / 1C / PRS 101 / PAO1</strain>
    </source>
</reference>
<reference key="3">
    <citation type="journal article" date="2017" name="Mol. Microbiol.">
        <title>Growth of Pseudomonas aeruginosa in zinc poor environments is promoted by a nicotianamine-related metallophore.</title>
        <authorList>
            <person name="Mastropasqua M.C."/>
            <person name="D'Orazio M."/>
            <person name="Cerasi M."/>
            <person name="Pacello F."/>
            <person name="Gismondi A."/>
            <person name="Canini A."/>
            <person name="Canuti L."/>
            <person name="Consalvo A."/>
            <person name="Ciavardelli D."/>
            <person name="Chirullo B."/>
            <person name="Pasquali P."/>
            <person name="Battistoni A."/>
        </authorList>
    </citation>
    <scope>INDUCTION</scope>
    <source>
        <strain>ATCC 15692 / DSM 22644 / CIP 104116 / JCM 14847 / LMG 12228 / 1C / PRS 101 / PAO1</strain>
    </source>
</reference>
<accession>Q9HUX6</accession>
<comment type="function">
    <text evidence="1 3">Transports the metallophore pseudopaline, which is involved in the acquisition of nickel and zinc, and thus enables bacterial growth inside the host, where metal access is limited. Is probably involved in the export of pseudopaline (By similarity). Essential for iron acquisition during the interaction with airway mucus secretions (AMS) (PubMed:26446565).</text>
</comment>
<comment type="subcellular location">
    <subcellularLocation>
        <location evidence="6">Cell inner membrane</location>
        <topology evidence="2">Multi-pass membrane protein</topology>
    </subcellularLocation>
</comment>
<comment type="induction">
    <text evidence="3 4">Is part of the operon cntOLMI that is negatively regulated by zinc level through the Zur repressor, which leads to transcriptional activation of this operon under zinc depletion (PubMed:28898501). Highly induced in response to airway mucus secretions (AMS) treatment (PubMed:26446565).</text>
</comment>
<comment type="disruption phenotype">
    <text evidence="3">The deletion mutant is susceptible to treatment with AMS and shows decreased intracellular iron content after incubation with AMS. In vivo virulence of the mutant is attenuated.</text>
</comment>
<comment type="similarity">
    <text evidence="6">Belongs to the EamA transporter family.</text>
</comment>
<organism>
    <name type="scientific">Pseudomonas aeruginosa (strain ATCC 15692 / DSM 22644 / CIP 104116 / JCM 14847 / LMG 12228 / 1C / PRS 101 / PAO1)</name>
    <dbReference type="NCBI Taxonomy" id="208964"/>
    <lineage>
        <taxon>Bacteria</taxon>
        <taxon>Pseudomonadati</taxon>
        <taxon>Pseudomonadota</taxon>
        <taxon>Gammaproteobacteria</taxon>
        <taxon>Pseudomonadales</taxon>
        <taxon>Pseudomonadaceae</taxon>
        <taxon>Pseudomonas</taxon>
    </lineage>
</organism>
<gene>
    <name evidence="1" type="primary">cntI</name>
    <name evidence="5" type="synonym">zrmD</name>
    <name evidence="7" type="ordered locus">PA4834</name>
</gene>
<feature type="chain" id="PRO_0000447266" description="Pseudopaline exporter CntI">
    <location>
        <begin position="1"/>
        <end position="284"/>
    </location>
</feature>
<feature type="transmembrane region" description="Helical" evidence="2">
    <location>
        <begin position="2"/>
        <end position="22"/>
    </location>
</feature>
<feature type="transmembrane region" description="Helical" evidence="2">
    <location>
        <begin position="34"/>
        <end position="54"/>
    </location>
</feature>
<feature type="transmembrane region" description="Helical" evidence="2">
    <location>
        <begin position="74"/>
        <end position="94"/>
    </location>
</feature>
<feature type="transmembrane region" description="Helical" evidence="2">
    <location>
        <begin position="96"/>
        <end position="116"/>
    </location>
</feature>
<feature type="transmembrane region" description="Helical" evidence="2">
    <location>
        <begin position="122"/>
        <end position="142"/>
    </location>
</feature>
<feature type="transmembrane region" description="Helical" evidence="2">
    <location>
        <begin position="147"/>
        <end position="167"/>
    </location>
</feature>
<feature type="transmembrane region" description="Helical" evidence="2">
    <location>
        <begin position="179"/>
        <end position="199"/>
    </location>
</feature>
<feature type="transmembrane region" description="Helical" evidence="2">
    <location>
        <begin position="209"/>
        <end position="229"/>
    </location>
</feature>
<feature type="transmembrane region" description="Helical" evidence="2">
    <location>
        <begin position="236"/>
        <end position="256"/>
    </location>
</feature>
<feature type="transmembrane region" description="Helical" evidence="2">
    <location>
        <begin position="259"/>
        <end position="279"/>
    </location>
</feature>
<feature type="domain" description="EamA 1" evidence="2">
    <location>
        <begin position="8"/>
        <end position="138"/>
    </location>
</feature>
<feature type="domain" description="EamA 2" evidence="2">
    <location>
        <begin position="151"/>
        <end position="279"/>
    </location>
</feature>